<dbReference type="EC" id="2.6.1.9" evidence="1"/>
<dbReference type="EMBL" id="CP000743">
    <property type="protein sequence ID" value="ABR55840.1"/>
    <property type="molecule type" value="Genomic_DNA"/>
</dbReference>
<dbReference type="RefSeq" id="WP_011972972.1">
    <property type="nucleotide sequence ID" value="NC_009635.1"/>
</dbReference>
<dbReference type="SMR" id="A6UTL8"/>
<dbReference type="STRING" id="419665.Maeo_0250"/>
<dbReference type="GeneID" id="5327756"/>
<dbReference type="GeneID" id="75305513"/>
<dbReference type="KEGG" id="mae:Maeo_0250"/>
<dbReference type="eggNOG" id="arCOG04273">
    <property type="taxonomic scope" value="Archaea"/>
</dbReference>
<dbReference type="HOGENOM" id="CLU_017584_3_3_2"/>
<dbReference type="OrthoDB" id="9929at2157"/>
<dbReference type="UniPathway" id="UPA00031">
    <property type="reaction ID" value="UER00012"/>
</dbReference>
<dbReference type="Proteomes" id="UP000001106">
    <property type="component" value="Chromosome"/>
</dbReference>
<dbReference type="GO" id="GO:0004400">
    <property type="term" value="F:histidinol-phosphate transaminase activity"/>
    <property type="evidence" value="ECO:0007669"/>
    <property type="project" value="UniProtKB-UniRule"/>
</dbReference>
<dbReference type="GO" id="GO:0030170">
    <property type="term" value="F:pyridoxal phosphate binding"/>
    <property type="evidence" value="ECO:0007669"/>
    <property type="project" value="InterPro"/>
</dbReference>
<dbReference type="GO" id="GO:0000105">
    <property type="term" value="P:L-histidine biosynthetic process"/>
    <property type="evidence" value="ECO:0007669"/>
    <property type="project" value="UniProtKB-UniRule"/>
</dbReference>
<dbReference type="CDD" id="cd00609">
    <property type="entry name" value="AAT_like"/>
    <property type="match status" value="1"/>
</dbReference>
<dbReference type="Gene3D" id="3.90.1150.10">
    <property type="entry name" value="Aspartate Aminotransferase, domain 1"/>
    <property type="match status" value="1"/>
</dbReference>
<dbReference type="Gene3D" id="3.40.640.10">
    <property type="entry name" value="Type I PLP-dependent aspartate aminotransferase-like (Major domain)"/>
    <property type="match status" value="1"/>
</dbReference>
<dbReference type="HAMAP" id="MF_01023">
    <property type="entry name" value="HisC_aminotrans_2"/>
    <property type="match status" value="1"/>
</dbReference>
<dbReference type="InterPro" id="IPR004839">
    <property type="entry name" value="Aminotransferase_I/II_large"/>
</dbReference>
<dbReference type="InterPro" id="IPR005861">
    <property type="entry name" value="HisP_aminotrans"/>
</dbReference>
<dbReference type="InterPro" id="IPR015424">
    <property type="entry name" value="PyrdxlP-dep_Trfase"/>
</dbReference>
<dbReference type="InterPro" id="IPR015421">
    <property type="entry name" value="PyrdxlP-dep_Trfase_major"/>
</dbReference>
<dbReference type="InterPro" id="IPR015422">
    <property type="entry name" value="PyrdxlP-dep_Trfase_small"/>
</dbReference>
<dbReference type="NCBIfam" id="TIGR01141">
    <property type="entry name" value="hisC"/>
    <property type="match status" value="1"/>
</dbReference>
<dbReference type="PANTHER" id="PTHR42885:SF2">
    <property type="entry name" value="HISTIDINOL-PHOSPHATE AMINOTRANSFERASE"/>
    <property type="match status" value="1"/>
</dbReference>
<dbReference type="PANTHER" id="PTHR42885">
    <property type="entry name" value="HISTIDINOL-PHOSPHATE AMINOTRANSFERASE-RELATED"/>
    <property type="match status" value="1"/>
</dbReference>
<dbReference type="Pfam" id="PF00155">
    <property type="entry name" value="Aminotran_1_2"/>
    <property type="match status" value="1"/>
</dbReference>
<dbReference type="SUPFAM" id="SSF53383">
    <property type="entry name" value="PLP-dependent transferases"/>
    <property type="match status" value="1"/>
</dbReference>
<comment type="catalytic activity">
    <reaction evidence="1">
        <text>L-histidinol phosphate + 2-oxoglutarate = 3-(imidazol-4-yl)-2-oxopropyl phosphate + L-glutamate</text>
        <dbReference type="Rhea" id="RHEA:23744"/>
        <dbReference type="ChEBI" id="CHEBI:16810"/>
        <dbReference type="ChEBI" id="CHEBI:29985"/>
        <dbReference type="ChEBI" id="CHEBI:57766"/>
        <dbReference type="ChEBI" id="CHEBI:57980"/>
        <dbReference type="EC" id="2.6.1.9"/>
    </reaction>
</comment>
<comment type="cofactor">
    <cofactor evidence="1">
        <name>pyridoxal 5'-phosphate</name>
        <dbReference type="ChEBI" id="CHEBI:597326"/>
    </cofactor>
</comment>
<comment type="pathway">
    <text evidence="1">Amino-acid biosynthesis; L-histidine biosynthesis; L-histidine from 5-phospho-alpha-D-ribose 1-diphosphate: step 7/9.</text>
</comment>
<comment type="similarity">
    <text evidence="1">Belongs to the class-II pyridoxal-phosphate-dependent aminotransferase family. Histidinol-phosphate aminotransferase subfamily.</text>
</comment>
<sequence>MTIDNKIRHIVKEFKAYVPGKSKEEIARNYNINPDEIIKLGSNENPWGSSPKIKEEILKELPNIHQYPEPVNPILMEELSKFTNIPKENIVVGGDGADEIIDTMMRILIDKDDEVIIPIPTFTQYRISAKIYGANIKYAKFDKEKDFKLDVDSVLNNITDKTKIIFLCTPNNPTGNIIDKKDIEKIINSTDALVMIDHAYIEYSKEEYDLTEFALKYDNVLILRTFSKVFGLAGQRIGYGITSKKIVDYMMRVKPIFSITRLSQICAITALRDKEFFEKSKNDGIKSMEILYNGLKEFKELKVYPSEANYLLVEVKNGMSSGEFCVELLKRGVIVRDCKSFEGLDGEYVRVAIGTFEEDRRFLEILKEIVN</sequence>
<feature type="chain" id="PRO_0000319797" description="Histidinol-phosphate aminotransferase">
    <location>
        <begin position="1"/>
        <end position="371"/>
    </location>
</feature>
<feature type="modified residue" description="N6-(pyridoxal phosphate)lysine" evidence="1">
    <location>
        <position position="228"/>
    </location>
</feature>
<proteinExistence type="inferred from homology"/>
<reference key="1">
    <citation type="submission" date="2007-06" db="EMBL/GenBank/DDBJ databases">
        <title>Complete sequence of Methanococcus aeolicus Nankai-3.</title>
        <authorList>
            <consortium name="US DOE Joint Genome Institute"/>
            <person name="Copeland A."/>
            <person name="Lucas S."/>
            <person name="Lapidus A."/>
            <person name="Barry K."/>
            <person name="Glavina del Rio T."/>
            <person name="Dalin E."/>
            <person name="Tice H."/>
            <person name="Pitluck S."/>
            <person name="Chain P."/>
            <person name="Malfatti S."/>
            <person name="Shin M."/>
            <person name="Vergez L."/>
            <person name="Schmutz J."/>
            <person name="Larimer F."/>
            <person name="Land M."/>
            <person name="Hauser L."/>
            <person name="Kyrpides N."/>
            <person name="Lykidis A."/>
            <person name="Sieprawska-Lupa M."/>
            <person name="Whitman W.B."/>
            <person name="Richardson P."/>
        </authorList>
    </citation>
    <scope>NUCLEOTIDE SEQUENCE [LARGE SCALE GENOMIC DNA]</scope>
    <source>
        <strain>ATCC BAA-1280 / DSM 17508 / OCM 812 / Nankai-3</strain>
    </source>
</reference>
<protein>
    <recommendedName>
        <fullName evidence="1">Histidinol-phosphate aminotransferase</fullName>
        <ecNumber evidence="1">2.6.1.9</ecNumber>
    </recommendedName>
    <alternativeName>
        <fullName evidence="1">Imidazole acetol-phosphate transaminase</fullName>
    </alternativeName>
</protein>
<evidence type="ECO:0000255" key="1">
    <source>
        <dbReference type="HAMAP-Rule" id="MF_01023"/>
    </source>
</evidence>
<keyword id="KW-0028">Amino-acid biosynthesis</keyword>
<keyword id="KW-0032">Aminotransferase</keyword>
<keyword id="KW-0368">Histidine biosynthesis</keyword>
<keyword id="KW-0663">Pyridoxal phosphate</keyword>
<keyword id="KW-0808">Transferase</keyword>
<name>HIS8_META3</name>
<organism>
    <name type="scientific">Methanococcus aeolicus (strain ATCC BAA-1280 / DSM 17508 / OCM 812 / Nankai-3)</name>
    <dbReference type="NCBI Taxonomy" id="419665"/>
    <lineage>
        <taxon>Archaea</taxon>
        <taxon>Methanobacteriati</taxon>
        <taxon>Methanobacteriota</taxon>
        <taxon>Methanomada group</taxon>
        <taxon>Methanococci</taxon>
        <taxon>Methanococcales</taxon>
        <taxon>Methanococcaceae</taxon>
        <taxon>Methanococcus</taxon>
    </lineage>
</organism>
<accession>A6UTL8</accession>
<gene>
    <name evidence="1" type="primary">hisC</name>
    <name type="ordered locus">Maeo_0250</name>
</gene>